<accession>F4K4J0</accession>
<accession>Q94BS3</accession>
<accession>Q9FMM6</accession>
<proteinExistence type="evidence at protein level"/>
<keyword id="KW-0025">Alternative splicing</keyword>
<keyword id="KW-0507">mRNA processing</keyword>
<keyword id="KW-0508">mRNA splicing</keyword>
<keyword id="KW-0509">mRNA transport</keyword>
<keyword id="KW-0539">Nucleus</keyword>
<keyword id="KW-1185">Reference proteome</keyword>
<keyword id="KW-0694">RNA-binding</keyword>
<keyword id="KW-0813">Transport</keyword>
<feature type="chain" id="PRO_0000425590" description="THO complex subunit 5B">
    <location>
        <begin position="1"/>
        <end position="819"/>
    </location>
</feature>
<feature type="region of interest" description="Disordered" evidence="2">
    <location>
        <begin position="285"/>
        <end position="332"/>
    </location>
</feature>
<feature type="splice variant" id="VSP_053743" description="In isoform 2." evidence="4">
    <location>
        <begin position="1"/>
        <end position="117"/>
    </location>
</feature>
<comment type="function">
    <text evidence="1">Acts as a component of the THO subcomplex of the TREX complex which is thought to couple mRNA transcription, processing and nuclear export.</text>
</comment>
<comment type="subunit">
    <text evidence="3">Component of the THO complex, which is composed of THO1, THO2, THO3, THO5, THO6 and THO7.</text>
</comment>
<comment type="subcellular location">
    <subcellularLocation>
        <location evidence="5">Nucleus</location>
    </subcellularLocation>
</comment>
<comment type="alternative products">
    <event type="alternative splicing"/>
    <isoform>
        <id>F4K4J0-1</id>
        <name>1</name>
        <sequence type="displayed"/>
    </isoform>
    <isoform>
        <id>F4K4J0-2</id>
        <name>2</name>
        <sequence type="described" ref="VSP_053743"/>
    </isoform>
</comment>
<comment type="similarity">
    <text evidence="5">Belongs to the THOC5 family.</text>
</comment>
<comment type="sequence caution" evidence="5">
    <conflict type="erroneous gene model prediction">
        <sequence resource="EMBL-CDS" id="BAB09194"/>
    </conflict>
</comment>
<organism>
    <name type="scientific">Arabidopsis thaliana</name>
    <name type="common">Mouse-ear cress</name>
    <dbReference type="NCBI Taxonomy" id="3702"/>
    <lineage>
        <taxon>Eukaryota</taxon>
        <taxon>Viridiplantae</taxon>
        <taxon>Streptophyta</taxon>
        <taxon>Embryophyta</taxon>
        <taxon>Tracheophyta</taxon>
        <taxon>Spermatophyta</taxon>
        <taxon>Magnoliopsida</taxon>
        <taxon>eudicotyledons</taxon>
        <taxon>Gunneridae</taxon>
        <taxon>Pentapetalae</taxon>
        <taxon>rosids</taxon>
        <taxon>malvids</taxon>
        <taxon>Brassicales</taxon>
        <taxon>Brassicaceae</taxon>
        <taxon>Camelineae</taxon>
        <taxon>Arabidopsis</taxon>
    </lineage>
</organism>
<sequence>MEDGEIEEGMVTADEFPTPEVTTIETIQPPREPGKSPLELLRESKTSVEEIVAKMLSMKKQGNHKSEIRELLTQMFLNFVNLRQANRAILTEEDKVKAETERAKAPVDFTTLQLHNLMYEKSHYVKAIKACRDFKSKYPDIDLVPEQDFFRHAPEAIKDQSLSSDSSHVLMPKRLNFELHQRKELCKHRARLEQQKKSLLETIAERKKFLSSLPLHLKSLKKASLPVQNHLGIQHTKKLKQHNLAELLPPPLYVLYSQLLAQKEAFEESIELEVVGSLKDAQAYARQQSRKDSGMSSNTESSRLEDDGPDDDDDGQRRRKRPKKLTSKEGSDKAGLYQVHPLKIVLHIYDDEIPDTKSLKLVILKFEYLLKLNVVCVGAEGSQDGPEKNIFCNLFPDDAGLEPPHQSTKLILGDGQTFDENRTSRPYKWVQHLAGIDISPVLLGQEAHNTDPAKSDTFVPDLSLYRQQHRVQTVLRRIRLRKKAHLALAEQLDLLMKHELPVVNCEDAPWALHKVLCALDSWLHIQSSASKSCSLTLNSVEQVPEPMEIDVDGRSISGKEDFESIREDGELPSLVTAAASLTSSNHTPSKVSNQARSRQLALMTKNLDSPISKGKSPSFKKYEDDLDLVLDDDSEIDEPTGRTEAHVEELCPEKADNSWVDYGSREFALVFSRKTDGGKLWKLEAMVQISMEYPLRPPLFSLSLHASSSSGNENGTNESDHYNELRAMEAEVNLHMLKIIPSDQENYLLSHQIRCLAMLFDYYVDDPSPDSKRGTATTVVDVGLCKPVDGKLLVRSFRGRDHRKMISWKGRGCASGYPC</sequence>
<dbReference type="EMBL" id="AB008264">
    <property type="protein sequence ID" value="BAB09194.1"/>
    <property type="status" value="ALT_SEQ"/>
    <property type="molecule type" value="Genomic_DNA"/>
</dbReference>
<dbReference type="EMBL" id="CP002688">
    <property type="protein sequence ID" value="AED94887.1"/>
    <property type="molecule type" value="Genomic_DNA"/>
</dbReference>
<dbReference type="EMBL" id="CP002688">
    <property type="protein sequence ID" value="AED94888.1"/>
    <property type="molecule type" value="Genomic_DNA"/>
</dbReference>
<dbReference type="EMBL" id="AY039925">
    <property type="protein sequence ID" value="AAK64029.1"/>
    <property type="molecule type" value="mRNA"/>
</dbReference>
<dbReference type="EMBL" id="AY091346">
    <property type="protein sequence ID" value="AAM14285.1"/>
    <property type="molecule type" value="mRNA"/>
</dbReference>
<dbReference type="RefSeq" id="NP_568616.1">
    <molecule id="F4K4J0-2"/>
    <property type="nucleotide sequence ID" value="NM_123657.3"/>
</dbReference>
<dbReference type="RefSeq" id="NP_974873.1">
    <molecule id="F4K4J0-1"/>
    <property type="nucleotide sequence ID" value="NM_203144.4"/>
</dbReference>
<dbReference type="SMR" id="F4K4J0"/>
<dbReference type="BioGRID" id="19554">
    <property type="interactions" value="45"/>
</dbReference>
<dbReference type="FunCoup" id="F4K4J0">
    <property type="interactions" value="4321"/>
</dbReference>
<dbReference type="IntAct" id="F4K4J0">
    <property type="interactions" value="2"/>
</dbReference>
<dbReference type="STRING" id="3702.F4K4J0"/>
<dbReference type="iPTMnet" id="F4K4J0"/>
<dbReference type="PaxDb" id="3702-AT5G42920.2"/>
<dbReference type="ProteomicsDB" id="246460">
    <molecule id="F4K4J0-1"/>
</dbReference>
<dbReference type="EnsemblPlants" id="AT5G42920.1">
    <molecule id="F4K4J0-2"/>
    <property type="protein sequence ID" value="AT5G42920.1"/>
    <property type="gene ID" value="AT5G42920"/>
</dbReference>
<dbReference type="EnsemblPlants" id="AT5G42920.2">
    <molecule id="F4K4J0-1"/>
    <property type="protein sequence ID" value="AT5G42920.2"/>
    <property type="gene ID" value="AT5G42920"/>
</dbReference>
<dbReference type="GeneID" id="834304"/>
<dbReference type="Gramene" id="AT5G42920.1">
    <molecule id="F4K4J0-2"/>
    <property type="protein sequence ID" value="AT5G42920.1"/>
    <property type="gene ID" value="AT5G42920"/>
</dbReference>
<dbReference type="Gramene" id="AT5G42920.2">
    <molecule id="F4K4J0-1"/>
    <property type="protein sequence ID" value="AT5G42920.2"/>
    <property type="gene ID" value="AT5G42920"/>
</dbReference>
<dbReference type="KEGG" id="ath:AT5G42920"/>
<dbReference type="Araport" id="AT5G42920"/>
<dbReference type="TAIR" id="AT5G42920">
    <property type="gene designation" value="THO5"/>
</dbReference>
<dbReference type="eggNOG" id="KOG2216">
    <property type="taxonomic scope" value="Eukaryota"/>
</dbReference>
<dbReference type="HOGENOM" id="CLU_019074_0_0_1"/>
<dbReference type="InParanoid" id="F4K4J0"/>
<dbReference type="OMA" id="KDMECTP"/>
<dbReference type="PRO" id="PR:F4K4J0"/>
<dbReference type="Proteomes" id="UP000006548">
    <property type="component" value="Chromosome 5"/>
</dbReference>
<dbReference type="ExpressionAtlas" id="F4K4J0">
    <property type="expression patterns" value="baseline and differential"/>
</dbReference>
<dbReference type="GO" id="GO:0000347">
    <property type="term" value="C:THO complex"/>
    <property type="evidence" value="ECO:0000314"/>
    <property type="project" value="UniProtKB"/>
</dbReference>
<dbReference type="GO" id="GO:0003723">
    <property type="term" value="F:RNA binding"/>
    <property type="evidence" value="ECO:0007669"/>
    <property type="project" value="UniProtKB-KW"/>
</dbReference>
<dbReference type="GO" id="GO:0006397">
    <property type="term" value="P:mRNA processing"/>
    <property type="evidence" value="ECO:0007669"/>
    <property type="project" value="UniProtKB-KW"/>
</dbReference>
<dbReference type="GO" id="GO:0051028">
    <property type="term" value="P:mRNA transport"/>
    <property type="evidence" value="ECO:0007669"/>
    <property type="project" value="UniProtKB-KW"/>
</dbReference>
<dbReference type="GO" id="GO:0008380">
    <property type="term" value="P:RNA splicing"/>
    <property type="evidence" value="ECO:0007669"/>
    <property type="project" value="UniProtKB-KW"/>
</dbReference>
<dbReference type="InterPro" id="IPR019163">
    <property type="entry name" value="THO_Thoc5"/>
</dbReference>
<dbReference type="PANTHER" id="PTHR13375">
    <property type="entry name" value="FMS INTERACTING PROTEIN"/>
    <property type="match status" value="1"/>
</dbReference>
<dbReference type="PANTHER" id="PTHR13375:SF3">
    <property type="entry name" value="THO COMPLEX SUBUNIT 5 HOMOLOG"/>
    <property type="match status" value="1"/>
</dbReference>
<dbReference type="Pfam" id="PF09766">
    <property type="entry name" value="FmiP_Thoc5"/>
    <property type="match status" value="1"/>
</dbReference>
<name>THO5B_ARATH</name>
<evidence type="ECO:0000250" key="1"/>
<evidence type="ECO:0000256" key="2">
    <source>
        <dbReference type="SAM" id="MobiDB-lite"/>
    </source>
</evidence>
<evidence type="ECO:0000269" key="3">
    <source>
    </source>
</evidence>
<evidence type="ECO:0000303" key="4">
    <source>
    </source>
</evidence>
<evidence type="ECO:0000305" key="5"/>
<gene>
    <name type="primary">THO5B</name>
    <name type="synonym">THO5</name>
    <name type="synonym">THOC5A</name>
    <name type="ordered locus">At5g42920</name>
    <name type="ORF">MBD2.12</name>
</gene>
<reference key="1">
    <citation type="journal article" date="1997" name="DNA Res.">
        <title>Structural analysis of Arabidopsis thaliana chromosome 5. III. Sequence features of the regions of 1,191,918 bp covered by seventeen physically assigned P1 clones.</title>
        <authorList>
            <person name="Nakamura Y."/>
            <person name="Sato S."/>
            <person name="Kaneko T."/>
            <person name="Kotani H."/>
            <person name="Asamizu E."/>
            <person name="Miyajima N."/>
            <person name="Tabata S."/>
        </authorList>
    </citation>
    <scope>NUCLEOTIDE SEQUENCE [LARGE SCALE GENOMIC DNA]</scope>
    <source>
        <strain>cv. Columbia</strain>
    </source>
</reference>
<reference key="2">
    <citation type="journal article" date="2017" name="Plant J.">
        <title>Araport11: a complete reannotation of the Arabidopsis thaliana reference genome.</title>
        <authorList>
            <person name="Cheng C.Y."/>
            <person name="Krishnakumar V."/>
            <person name="Chan A.P."/>
            <person name="Thibaud-Nissen F."/>
            <person name="Schobel S."/>
            <person name="Town C.D."/>
        </authorList>
    </citation>
    <scope>GENOME REANNOTATION</scope>
    <source>
        <strain>cv. Columbia</strain>
    </source>
</reference>
<reference key="3">
    <citation type="journal article" date="2003" name="Science">
        <title>Empirical analysis of transcriptional activity in the Arabidopsis genome.</title>
        <authorList>
            <person name="Yamada K."/>
            <person name="Lim J."/>
            <person name="Dale J.M."/>
            <person name="Chen H."/>
            <person name="Shinn P."/>
            <person name="Palm C.J."/>
            <person name="Southwick A.M."/>
            <person name="Wu H.C."/>
            <person name="Kim C.J."/>
            <person name="Nguyen M."/>
            <person name="Pham P.K."/>
            <person name="Cheuk R.F."/>
            <person name="Karlin-Newmann G."/>
            <person name="Liu S.X."/>
            <person name="Lam B."/>
            <person name="Sakano H."/>
            <person name="Wu T."/>
            <person name="Yu G."/>
            <person name="Miranda M."/>
            <person name="Quach H.L."/>
            <person name="Tripp M."/>
            <person name="Chang C.H."/>
            <person name="Lee J.M."/>
            <person name="Toriumi M.J."/>
            <person name="Chan M.M."/>
            <person name="Tang C.C."/>
            <person name="Onodera C.S."/>
            <person name="Deng J.M."/>
            <person name="Akiyama K."/>
            <person name="Ansari Y."/>
            <person name="Arakawa T."/>
            <person name="Banh J."/>
            <person name="Banno F."/>
            <person name="Bowser L."/>
            <person name="Brooks S.Y."/>
            <person name="Carninci P."/>
            <person name="Chao Q."/>
            <person name="Choy N."/>
            <person name="Enju A."/>
            <person name="Goldsmith A.D."/>
            <person name="Gurjal M."/>
            <person name="Hansen N.F."/>
            <person name="Hayashizaki Y."/>
            <person name="Johnson-Hopson C."/>
            <person name="Hsuan V.W."/>
            <person name="Iida K."/>
            <person name="Karnes M."/>
            <person name="Khan S."/>
            <person name="Koesema E."/>
            <person name="Ishida J."/>
            <person name="Jiang P.X."/>
            <person name="Jones T."/>
            <person name="Kawai J."/>
            <person name="Kamiya A."/>
            <person name="Meyers C."/>
            <person name="Nakajima M."/>
            <person name="Narusaka M."/>
            <person name="Seki M."/>
            <person name="Sakurai T."/>
            <person name="Satou M."/>
            <person name="Tamse R."/>
            <person name="Vaysberg M."/>
            <person name="Wallender E.K."/>
            <person name="Wong C."/>
            <person name="Yamamura Y."/>
            <person name="Yuan S."/>
            <person name="Shinozaki K."/>
            <person name="Davis R.W."/>
            <person name="Theologis A."/>
            <person name="Ecker J.R."/>
        </authorList>
    </citation>
    <scope>NUCLEOTIDE SEQUENCE [LARGE SCALE MRNA] (ISOFORM 2)</scope>
    <source>
        <strain>cv. Columbia</strain>
    </source>
</reference>
<reference key="4">
    <citation type="journal article" date="2010" name="Proc. Natl. Acad. Sci. U.S.A.">
        <title>Putative Arabidopsis THO/TREX mRNA export complex is involved in transgene and endogenous siRNA biosynthesis.</title>
        <authorList>
            <person name="Yelina N.E."/>
            <person name="Smith L.M."/>
            <person name="Jones A.M."/>
            <person name="Patel K."/>
            <person name="Kelly K.A."/>
            <person name="Baulcombe D.C."/>
        </authorList>
    </citation>
    <scope>IDENTIFICATION BY MASS SPECTROMETRY</scope>
    <scope>SUBUNIT</scope>
</reference>
<protein>
    <recommendedName>
        <fullName>THO complex subunit 5B</fullName>
    </recommendedName>
    <alternativeName>
        <fullName>THO complex subunit 5</fullName>
        <shortName>AtTHO5</shortName>
    </alternativeName>
</protein>